<sequence>MVRRYTSHSFQAQKCSWEHSNSTHWLSEFTRFRRRKWNLNIWRKQCDRGTWVLKQLHGQLAKSMKSRLHLQLSLD</sequence>
<accession>P16607</accession>
<name>Y9KD_MAGV</name>
<organismHost>
    <name type="scientific">Equus caballus</name>
    <name type="common">Horse</name>
    <dbReference type="NCBI Taxonomy" id="9796"/>
</organismHost>
<organism>
    <name type="scientific">Maguari virus</name>
    <dbReference type="NCBI Taxonomy" id="11575"/>
    <lineage>
        <taxon>Viruses</taxon>
        <taxon>Riboviria</taxon>
        <taxon>Orthornavirae</taxon>
        <taxon>Negarnaviricota</taxon>
        <taxon>Polyploviricotina</taxon>
        <taxon>Ellioviricetes</taxon>
        <taxon>Bunyavirales</taxon>
        <taxon>Peribunyaviridae</taxon>
        <taxon>Orthobunyavirus</taxon>
        <taxon>Orthobunyavirus maguariense</taxon>
    </lineage>
</organism>
<reference key="1">
    <citation type="journal article" date="1989" name="Virology">
        <title>Nucleotide sequence and expression of the small (S) RNA segment of Maguari bunyavirus.</title>
        <authorList>
            <person name="Elliott R.M."/>
            <person name="McGregor A."/>
        </authorList>
    </citation>
    <scope>NUCLEOTIDE SEQUENCE [GENOMIC RNA]</scope>
</reference>
<proteinExistence type="predicted"/>
<protein>
    <recommendedName>
        <fullName>Putative uncharacterized 9.3 kDa protein</fullName>
    </recommendedName>
</protein>
<dbReference type="EMBL" id="M28380">
    <property type="protein sequence ID" value="AAA57149.1"/>
    <property type="molecule type" value="Genomic_RNA"/>
</dbReference>
<dbReference type="EMBL" id="D13783">
    <property type="protein sequence ID" value="BAA02928.1"/>
    <property type="molecule type" value="Genomic_RNA"/>
</dbReference>
<dbReference type="PIR" id="C33076">
    <property type="entry name" value="QQVUMB"/>
</dbReference>
<feature type="chain" id="PRO_0000222019" description="Putative uncharacterized 9.3 kDa protein">
    <location>
        <begin position="1"/>
        <end position="75"/>
    </location>
</feature>